<protein>
    <recommendedName>
        <fullName evidence="1">Thiazole synthase</fullName>
        <ecNumber evidence="1">2.8.1.10</ecNumber>
    </recommendedName>
</protein>
<sequence>MTSLTSADALTLYGETFASRVLIGTSRYPSLQSLSDSIAASRPGMVTVALRRQMTGGTAEAGFFDLLKRHAVPLLPNTAGCQTVAEAVTTAHMAREVFGTDWIKLELIGDDYTLQPDPVGLIEAAAQLVKDGFKVLPYCTEDLVIGRRLLDVGCEALMPWGAPIGTGKGVVNPYGLRVLRERLPDVPLIVDAGLGVPSHACQVMEWGFDGVLLNTAVSQATHPEIMARAFAQGVEAGRAAYLAGPMDARETAHASTPVVGMPFWHQDGGGA</sequence>
<evidence type="ECO:0000255" key="1">
    <source>
        <dbReference type="HAMAP-Rule" id="MF_00443"/>
    </source>
</evidence>
<keyword id="KW-0963">Cytoplasm</keyword>
<keyword id="KW-0704">Schiff base</keyword>
<keyword id="KW-0784">Thiamine biosynthesis</keyword>
<keyword id="KW-0808">Transferase</keyword>
<proteinExistence type="inferred from homology"/>
<name>THIG_BURL3</name>
<comment type="function">
    <text evidence="1">Catalyzes the rearrangement of 1-deoxy-D-xylulose 5-phosphate (DXP) to produce the thiazole phosphate moiety of thiamine. Sulfur is provided by the thiocarboxylate moiety of the carrier protein ThiS. In vitro, sulfur can be provided by H(2)S.</text>
</comment>
<comment type="catalytic activity">
    <reaction evidence="1">
        <text>[ThiS sulfur-carrier protein]-C-terminal-Gly-aminoethanethioate + 2-iminoacetate + 1-deoxy-D-xylulose 5-phosphate = [ThiS sulfur-carrier protein]-C-terminal Gly-Gly + 2-[(2R,5Z)-2-carboxy-4-methylthiazol-5(2H)-ylidene]ethyl phosphate + 2 H2O + H(+)</text>
        <dbReference type="Rhea" id="RHEA:26297"/>
        <dbReference type="Rhea" id="RHEA-COMP:12909"/>
        <dbReference type="Rhea" id="RHEA-COMP:19908"/>
        <dbReference type="ChEBI" id="CHEBI:15377"/>
        <dbReference type="ChEBI" id="CHEBI:15378"/>
        <dbReference type="ChEBI" id="CHEBI:57792"/>
        <dbReference type="ChEBI" id="CHEBI:62899"/>
        <dbReference type="ChEBI" id="CHEBI:77846"/>
        <dbReference type="ChEBI" id="CHEBI:90778"/>
        <dbReference type="ChEBI" id="CHEBI:232372"/>
        <dbReference type="EC" id="2.8.1.10"/>
    </reaction>
</comment>
<comment type="pathway">
    <text evidence="1">Cofactor biosynthesis; thiamine diphosphate biosynthesis.</text>
</comment>
<comment type="subunit">
    <text evidence="1">Homotetramer. Forms heterodimers with either ThiH or ThiS.</text>
</comment>
<comment type="subcellular location">
    <subcellularLocation>
        <location evidence="1">Cytoplasm</location>
    </subcellularLocation>
</comment>
<comment type="similarity">
    <text evidence="1">Belongs to the ThiG family.</text>
</comment>
<dbReference type="EC" id="2.8.1.10" evidence="1"/>
<dbReference type="EMBL" id="CP000151">
    <property type="protein sequence ID" value="ABB07112.1"/>
    <property type="molecule type" value="Genomic_DNA"/>
</dbReference>
<dbReference type="RefSeq" id="WP_011350714.1">
    <property type="nucleotide sequence ID" value="NZ_WNDV01000034.1"/>
</dbReference>
<dbReference type="SMR" id="Q39KA4"/>
<dbReference type="GeneID" id="45093426"/>
<dbReference type="KEGG" id="bur:Bcep18194_A3510"/>
<dbReference type="PATRIC" id="fig|482957.22.peg.355"/>
<dbReference type="HOGENOM" id="CLU_062233_1_0_4"/>
<dbReference type="UniPathway" id="UPA00060"/>
<dbReference type="Proteomes" id="UP000002705">
    <property type="component" value="Chromosome 1"/>
</dbReference>
<dbReference type="GO" id="GO:0005737">
    <property type="term" value="C:cytoplasm"/>
    <property type="evidence" value="ECO:0007669"/>
    <property type="project" value="UniProtKB-SubCell"/>
</dbReference>
<dbReference type="GO" id="GO:1990107">
    <property type="term" value="F:thiazole synthase activity"/>
    <property type="evidence" value="ECO:0007669"/>
    <property type="project" value="UniProtKB-EC"/>
</dbReference>
<dbReference type="GO" id="GO:0009229">
    <property type="term" value="P:thiamine diphosphate biosynthetic process"/>
    <property type="evidence" value="ECO:0007669"/>
    <property type="project" value="UniProtKB-UniRule"/>
</dbReference>
<dbReference type="CDD" id="cd04728">
    <property type="entry name" value="ThiG"/>
    <property type="match status" value="1"/>
</dbReference>
<dbReference type="Gene3D" id="3.20.20.70">
    <property type="entry name" value="Aldolase class I"/>
    <property type="match status" value="1"/>
</dbReference>
<dbReference type="HAMAP" id="MF_00443">
    <property type="entry name" value="ThiG"/>
    <property type="match status" value="1"/>
</dbReference>
<dbReference type="InterPro" id="IPR013785">
    <property type="entry name" value="Aldolase_TIM"/>
</dbReference>
<dbReference type="InterPro" id="IPR033983">
    <property type="entry name" value="Thiazole_synthase_ThiG"/>
</dbReference>
<dbReference type="InterPro" id="IPR008867">
    <property type="entry name" value="ThiG"/>
</dbReference>
<dbReference type="PANTHER" id="PTHR34266">
    <property type="entry name" value="THIAZOLE SYNTHASE"/>
    <property type="match status" value="1"/>
</dbReference>
<dbReference type="PANTHER" id="PTHR34266:SF2">
    <property type="entry name" value="THIAZOLE SYNTHASE"/>
    <property type="match status" value="1"/>
</dbReference>
<dbReference type="Pfam" id="PF05690">
    <property type="entry name" value="ThiG"/>
    <property type="match status" value="1"/>
</dbReference>
<dbReference type="SUPFAM" id="SSF110399">
    <property type="entry name" value="ThiG-like"/>
    <property type="match status" value="1"/>
</dbReference>
<reference key="1">
    <citation type="submission" date="2005-10" db="EMBL/GenBank/DDBJ databases">
        <title>Complete sequence of chromosome 1 of Burkholderia sp. 383.</title>
        <authorList>
            <consortium name="US DOE Joint Genome Institute"/>
            <person name="Copeland A."/>
            <person name="Lucas S."/>
            <person name="Lapidus A."/>
            <person name="Barry K."/>
            <person name="Detter J.C."/>
            <person name="Glavina T."/>
            <person name="Hammon N."/>
            <person name="Israni S."/>
            <person name="Pitluck S."/>
            <person name="Chain P."/>
            <person name="Malfatti S."/>
            <person name="Shin M."/>
            <person name="Vergez L."/>
            <person name="Schmutz J."/>
            <person name="Larimer F."/>
            <person name="Land M."/>
            <person name="Kyrpides N."/>
            <person name="Lykidis A."/>
            <person name="Richardson P."/>
        </authorList>
    </citation>
    <scope>NUCLEOTIDE SEQUENCE [LARGE SCALE GENOMIC DNA]</scope>
    <source>
        <strain>ATCC 17760 / DSM 23089 / LMG 22485 / NCIMB 9086 / R18194 / 383</strain>
    </source>
</reference>
<accession>Q39KA4</accession>
<organism>
    <name type="scientific">Burkholderia lata (strain ATCC 17760 / DSM 23089 / LMG 22485 / NCIMB 9086 / R18194 / 383)</name>
    <dbReference type="NCBI Taxonomy" id="482957"/>
    <lineage>
        <taxon>Bacteria</taxon>
        <taxon>Pseudomonadati</taxon>
        <taxon>Pseudomonadota</taxon>
        <taxon>Betaproteobacteria</taxon>
        <taxon>Burkholderiales</taxon>
        <taxon>Burkholderiaceae</taxon>
        <taxon>Burkholderia</taxon>
        <taxon>Burkholderia cepacia complex</taxon>
    </lineage>
</organism>
<feature type="chain" id="PRO_0000236335" description="Thiazole synthase">
    <location>
        <begin position="1"/>
        <end position="271"/>
    </location>
</feature>
<feature type="active site" description="Schiff-base intermediate with DXP" evidence="1">
    <location>
        <position position="104"/>
    </location>
</feature>
<feature type="binding site" evidence="1">
    <location>
        <position position="165"/>
    </location>
    <ligand>
        <name>1-deoxy-D-xylulose 5-phosphate</name>
        <dbReference type="ChEBI" id="CHEBI:57792"/>
    </ligand>
</feature>
<feature type="binding site" evidence="1">
    <location>
        <begin position="192"/>
        <end position="193"/>
    </location>
    <ligand>
        <name>1-deoxy-D-xylulose 5-phosphate</name>
        <dbReference type="ChEBI" id="CHEBI:57792"/>
    </ligand>
</feature>
<feature type="binding site" evidence="1">
    <location>
        <begin position="214"/>
        <end position="215"/>
    </location>
    <ligand>
        <name>1-deoxy-D-xylulose 5-phosphate</name>
        <dbReference type="ChEBI" id="CHEBI:57792"/>
    </ligand>
</feature>
<gene>
    <name evidence="1" type="primary">thiG</name>
    <name type="ordered locus">Bcep18194_A3510</name>
</gene>